<name>CDUB2_CHLTS</name>
<reference key="1">
    <citation type="journal article" date="2010" name="Microbiology">
        <title>The Swedish new variant of Chlamydia trachomatis: Genome sequence, morphology, cell tropism and phenotypic characterization.</title>
        <authorList>
            <person name="Unemo M."/>
            <person name="Seth-Smith H.M."/>
            <person name="Cutcliffe L.T."/>
            <person name="Skilton R.J."/>
            <person name="Barlow D."/>
            <person name="Goulding D."/>
            <person name="Persson K."/>
            <person name="Harris S.R."/>
            <person name="Kelly A."/>
            <person name="Bjartling C."/>
            <person name="Fredlund H."/>
            <person name="Olcen P."/>
            <person name="Thomson N.R."/>
            <person name="Clarke I.N."/>
        </authorList>
    </citation>
    <scope>NUCLEOTIDE SEQUENCE [LARGE SCALE GENOMIC DNA]</scope>
    <source>
        <strain>Sweden2</strain>
    </source>
</reference>
<gene>
    <name type="primary">cdu2</name>
    <name type="ordered locus">SW2_8831</name>
</gene>
<feature type="chain" id="PRO_0000396502" description="Deubiquitinase and deneddylase Dub2">
    <location>
        <begin position="1"/>
        <end position="339"/>
    </location>
</feature>
<feature type="transmembrane region" description="Helical" evidence="2">
    <location>
        <begin position="36"/>
        <end position="56"/>
    </location>
</feature>
<feature type="active site" evidence="2">
    <location>
        <position position="203"/>
    </location>
</feature>
<feature type="active site" evidence="2">
    <location>
        <position position="220"/>
    </location>
</feature>
<feature type="active site" evidence="2">
    <location>
        <position position="282"/>
    </location>
</feature>
<evidence type="ECO:0000250" key="1"/>
<evidence type="ECO:0000255" key="2"/>
<evidence type="ECO:0000305" key="3"/>
<accession>D3UTF3</accession>
<proteinExistence type="inferred from homology"/>
<sequence length="339" mass="38411">MEPIHNPPPQTCSYSRPSTTYTSFKDASCGTKVTRIIIALFLIVISCGLILCAYTFRDLLDADYSAQEGPQQATKLLQQLDKVLTGPPLPIWDNEHLFQFSCLMQNKHRRVLPIDICNPLTKFNFLEYICNCLMTKQSVNVNETDMCELFCPPTCTPENYRRLLCTSSVFPFVMWHDPSADTQEAMLTKMDQTMSSGRVGNSHWVLVIVDIEHRCVTFFDSFYDYIASPQQMREQLEGLAASLGAIYPKEGGADSDQEELLSPFQVRIGSTVKVQSPGEFTCGAWCCQFLAWYLENPDFDLEEKVPTNPSERRALLADFISTTEQAMSRYSSLSWPTTD</sequence>
<organism>
    <name type="scientific">Chlamydia trachomatis serovar E (strain Sweden2)</name>
    <dbReference type="NCBI Taxonomy" id="634464"/>
    <lineage>
        <taxon>Bacteria</taxon>
        <taxon>Pseudomonadati</taxon>
        <taxon>Chlamydiota</taxon>
        <taxon>Chlamydiia</taxon>
        <taxon>Chlamydiales</taxon>
        <taxon>Chlamydiaceae</taxon>
        <taxon>Chlamydia/Chlamydophila group</taxon>
        <taxon>Chlamydia</taxon>
    </lineage>
</organism>
<dbReference type="EC" id="3.4.22.-"/>
<dbReference type="EMBL" id="FN652779">
    <property type="protein sequence ID" value="CBJ15396.1"/>
    <property type="molecule type" value="Genomic_DNA"/>
</dbReference>
<dbReference type="RefSeq" id="WP_009872257.1">
    <property type="nucleotide sequence ID" value="NC_017441.1"/>
</dbReference>
<dbReference type="SMR" id="D3UTF3"/>
<dbReference type="KEGG" id="csw:SW2_8831"/>
<dbReference type="PATRIC" id="fig|634464.3.peg.963"/>
<dbReference type="HOGENOM" id="CLU_067510_0_0_0"/>
<dbReference type="GO" id="GO:0005576">
    <property type="term" value="C:extracellular region"/>
    <property type="evidence" value="ECO:0000250"/>
    <property type="project" value="UniProtKB"/>
</dbReference>
<dbReference type="GO" id="GO:0043657">
    <property type="term" value="C:host cell"/>
    <property type="evidence" value="ECO:0007669"/>
    <property type="project" value="UniProtKB-SubCell"/>
</dbReference>
<dbReference type="GO" id="GO:0016020">
    <property type="term" value="C:membrane"/>
    <property type="evidence" value="ECO:0007669"/>
    <property type="project" value="UniProtKB-SubCell"/>
</dbReference>
<dbReference type="GO" id="GO:0004843">
    <property type="term" value="F:cysteine-type deubiquitinase activity"/>
    <property type="evidence" value="ECO:0000250"/>
    <property type="project" value="UniProtKB"/>
</dbReference>
<dbReference type="GO" id="GO:0019784">
    <property type="term" value="F:deNEDDylase activity"/>
    <property type="evidence" value="ECO:0000250"/>
    <property type="project" value="UniProtKB"/>
</dbReference>
<dbReference type="GO" id="GO:0000338">
    <property type="term" value="P:protein deneddylation"/>
    <property type="evidence" value="ECO:0000250"/>
    <property type="project" value="UniProtKB"/>
</dbReference>
<dbReference type="GO" id="GO:0016579">
    <property type="term" value="P:protein deubiquitination"/>
    <property type="evidence" value="ECO:0000250"/>
    <property type="project" value="UniProtKB"/>
</dbReference>
<dbReference type="GO" id="GO:0006508">
    <property type="term" value="P:proteolysis"/>
    <property type="evidence" value="ECO:0007669"/>
    <property type="project" value="UniProtKB-KW"/>
</dbReference>
<dbReference type="FunFam" id="3.40.395.10:FF:000012">
    <property type="entry name" value="Deubiquitinase and deneddylase Dub2"/>
    <property type="match status" value="1"/>
</dbReference>
<dbReference type="Gene3D" id="3.40.395.10">
    <property type="entry name" value="Adenoviral Proteinase, Chain A"/>
    <property type="match status" value="1"/>
</dbReference>
<dbReference type="InterPro" id="IPR038765">
    <property type="entry name" value="Papain-like_cys_pep_sf"/>
</dbReference>
<dbReference type="InterPro" id="IPR003653">
    <property type="entry name" value="Peptidase_C48_C"/>
</dbReference>
<dbReference type="Pfam" id="PF02902">
    <property type="entry name" value="Peptidase_C48"/>
    <property type="match status" value="1"/>
</dbReference>
<dbReference type="SUPFAM" id="SSF54001">
    <property type="entry name" value="Cysteine proteinases"/>
    <property type="match status" value="1"/>
</dbReference>
<keyword id="KW-0378">Hydrolase</keyword>
<keyword id="KW-0472">Membrane</keyword>
<keyword id="KW-0645">Protease</keyword>
<keyword id="KW-0964">Secreted</keyword>
<keyword id="KW-0788">Thiol protease</keyword>
<keyword id="KW-0812">Transmembrane</keyword>
<keyword id="KW-1133">Transmembrane helix</keyword>
<keyword id="KW-0833">Ubl conjugation pathway</keyword>
<keyword id="KW-0843">Virulence</keyword>
<comment type="function">
    <text evidence="1">Effector proteins function to alter host cell physiology and promote bacterial survival in host tissues. This protease possesses deubiquitinating and deneddylating activities (By similarity).</text>
</comment>
<comment type="subcellular location">
    <subcellularLocation>
        <location evidence="1">Secreted</location>
    </subcellularLocation>
    <subcellularLocation>
        <location evidence="1">Host cell</location>
    </subcellularLocation>
    <subcellularLocation>
        <location evidence="1">Membrane</location>
        <topology evidence="1">Single-pass membrane protein</topology>
    </subcellularLocation>
    <text evidence="1">Secreted, and delivered into the host cell.</text>
</comment>
<comment type="similarity">
    <text evidence="3">Belongs to the peptidase C48 family.</text>
</comment>
<protein>
    <recommendedName>
        <fullName>Deubiquitinase and deneddylase Dub2</fullName>
        <shortName>ChlaDub2</shortName>
        <ecNumber>3.4.22.-</ecNumber>
    </recommendedName>
</protein>